<dbReference type="EMBL" id="GEMQ01000034">
    <property type="protein sequence ID" value="JAT91155.1"/>
    <property type="molecule type" value="mRNA"/>
</dbReference>
<dbReference type="PDB" id="2JP6">
    <property type="method" value="NMR"/>
    <property type="chains" value="A=27-61"/>
</dbReference>
<dbReference type="PDBsum" id="2JP6"/>
<dbReference type="BMRB" id="P60211"/>
<dbReference type="SMR" id="P60211"/>
<dbReference type="EvolutionaryTrace" id="P60211"/>
<dbReference type="GO" id="GO:0005576">
    <property type="term" value="C:extracellular region"/>
    <property type="evidence" value="ECO:0007005"/>
    <property type="project" value="UniProtKB"/>
</dbReference>
<dbReference type="GO" id="GO:0019870">
    <property type="term" value="F:potassium channel inhibitor activity"/>
    <property type="evidence" value="ECO:0000314"/>
    <property type="project" value="UniProtKB"/>
</dbReference>
<dbReference type="GO" id="GO:0090729">
    <property type="term" value="F:toxin activity"/>
    <property type="evidence" value="ECO:0000314"/>
    <property type="project" value="UniProtKB"/>
</dbReference>
<dbReference type="GO" id="GO:0044562">
    <property type="term" value="P:envenomation resulting in negative regulation of voltage-gated potassium channel activity in another organism"/>
    <property type="evidence" value="ECO:0000314"/>
    <property type="project" value="UniProtKB"/>
</dbReference>
<protein>
    <recommendedName>
        <fullName>Potassium channel toxin alpha-KTx 18.1</fullName>
    </recommendedName>
    <alternativeName>
        <fullName evidence="5">Toxin Tc32</fullName>
    </alternativeName>
    <alternativeName>
        <fullName evidence="6">Toxin To32</fullName>
    </alternativeName>
</protein>
<feature type="signal peptide" evidence="1">
    <location>
        <begin position="1"/>
        <end position="24"/>
    </location>
</feature>
<feature type="peptide" id="PRO_0000044921" description="Potassium channel toxin alpha-KTx 18.1" evidence="2">
    <location>
        <begin position="25"/>
        <end position="61"/>
    </location>
</feature>
<feature type="site" description="Penetrates into Kv pores (more deeply into Kv1.3 than into Kv1.1)" evidence="7">
    <location>
        <position position="60"/>
    </location>
</feature>
<feature type="disulfide bond" evidence="4">
    <location>
        <begin position="33"/>
        <end position="52"/>
    </location>
</feature>
<feature type="disulfide bond" evidence="4">
    <location>
        <begin position="38"/>
        <end position="57"/>
    </location>
</feature>
<feature type="disulfide bond" evidence="4">
    <location>
        <begin position="42"/>
        <end position="59"/>
    </location>
</feature>
<feature type="strand" evidence="9">
    <location>
        <begin position="27"/>
        <end position="29"/>
    </location>
</feature>
<feature type="helix" evidence="9">
    <location>
        <begin position="36"/>
        <end position="45"/>
    </location>
</feature>
<feature type="strand" evidence="9">
    <location>
        <begin position="47"/>
        <end position="50"/>
    </location>
</feature>
<feature type="strand" evidence="9">
    <location>
        <begin position="52"/>
        <end position="55"/>
    </location>
</feature>
<feature type="strand" evidence="9">
    <location>
        <begin position="58"/>
        <end position="60"/>
    </location>
</feature>
<reference evidence="8" key="1">
    <citation type="journal article" date="2018" name="PLoS ONE">
        <title>Proteomic endorsed transcriptomic profiles of venom glands from Tityus obscurus and T. serrulatus scorpions.</title>
        <authorList>
            <person name="de Oliveira U.C."/>
            <person name="Nishiyama M.Y. Jr."/>
            <person name="Dos Santos M.B.V."/>
            <person name="Santos-da-Silva A.P."/>
            <person name="Chalkidis H.M."/>
            <person name="Souza-Imberg A."/>
            <person name="Candido D.M."/>
            <person name="Yamanouye N."/>
            <person name="Dorce V.A.C."/>
            <person name="Junqueira-de-Azevedo I.L.M."/>
        </authorList>
    </citation>
    <scope>NUCLEOTIDE SEQUENCE [MRNA]</scope>
    <source>
        <tissue>Telson</tissue>
    </source>
</reference>
<reference key="2">
    <citation type="journal article" date="2002" name="Biochim. Biophys. Acta">
        <title>Two novel toxins from the Amazonian scorpion Tityus cambridgei that block Kv1.3 and Shaker B K(+)-channels with distinctly different affinities.</title>
        <authorList>
            <person name="Batista C.V.F."/>
            <person name="Gomez-Lagunas F."/>
            <person name="Rodriguez de la Vega R.C."/>
            <person name="Hajdu P."/>
            <person name="Panyi G."/>
            <person name="Gaspar R."/>
            <person name="Possani L.D."/>
        </authorList>
    </citation>
    <scope>PROTEIN SEQUENCE OF 25-61</scope>
    <scope>FUNCTION</scope>
    <scope>MASS SPECTROMETRY</scope>
    <scope>3D-STRUCTURE MODELING</scope>
    <source>
        <tissue>Venom</tissue>
    </source>
</reference>
<reference key="3">
    <citation type="journal article" date="2004" name="J. Chromatogr. B">
        <title>Proteomics of the venom from the Amazonian scorpion Tityus cambridgei and the role of prolines on mass spectrometry analysis of toxins.</title>
        <authorList>
            <person name="Batista C.V.F."/>
            <person name="del Pozo L."/>
            <person name="Zamudio F.Z."/>
            <person name="Contreras S."/>
            <person name="Becerril B."/>
            <person name="Wanke E."/>
            <person name="Possani L.D."/>
        </authorList>
    </citation>
    <scope>PROTEIN SEQUENCE OF 25-36</scope>
    <scope>SUBCELLULAR LOCATION</scope>
    <scope>MASS SPECTROMETRY</scope>
    <source>
        <tissue>Venom</tissue>
    </source>
</reference>
<reference key="4">
    <citation type="journal article" date="2012" name="Biochemistry">
        <title>Looking over toxin-K(+) channel interactions. Clues from the structural and functional characterization of alpha-KTx toxin Tc32, a Kv1.3 channel blocker.</title>
        <authorList>
            <person name="Stehling E.G."/>
            <person name="Sforca M.L."/>
            <person name="Zanchin N.I."/>
            <person name="Oyama S. Jr."/>
            <person name="Pignatelli A."/>
            <person name="Belluzzi O."/>
            <person name="Polverini E."/>
            <person name="Corsini R."/>
            <person name="Spisni A."/>
            <person name="Pertinhez T.A."/>
        </authorList>
    </citation>
    <scope>STRUCTURE BY NMR OF 25-61</scope>
    <scope>DISULFIDE BOND</scope>
</reference>
<accession>P60211</accession>
<accession>A0A1E1WVW1</accession>
<name>KA181_TITOB</name>
<organism>
    <name type="scientific">Tityus obscurus</name>
    <name type="common">Amazonian scorpion</name>
    <name type="synonym">Tityus cambridgei</name>
    <dbReference type="NCBI Taxonomy" id="1221240"/>
    <lineage>
        <taxon>Eukaryota</taxon>
        <taxon>Metazoa</taxon>
        <taxon>Ecdysozoa</taxon>
        <taxon>Arthropoda</taxon>
        <taxon>Chelicerata</taxon>
        <taxon>Arachnida</taxon>
        <taxon>Scorpiones</taxon>
        <taxon>Buthida</taxon>
        <taxon>Buthoidea</taxon>
        <taxon>Buthidae</taxon>
        <taxon>Tityus</taxon>
    </lineage>
</organism>
<comment type="function">
    <text evidence="2">Reversible blocker of both Kv1.3/KCNA3 potassium channels (high affinity) and Shaker B (mammalian Kv1.1 analog) potassium channels (very low affinity).</text>
</comment>
<comment type="subcellular location">
    <subcellularLocation>
        <location evidence="3">Secreted</location>
    </subcellularLocation>
</comment>
<comment type="tissue specificity">
    <text evidence="6">Expressed by the venom gland.</text>
</comment>
<comment type="domain">
    <text evidence="7">Has the structural arrangement of an alpha-helix connected to a beta-sheet by disulfide bonds (CSalpha/beta).</text>
</comment>
<comment type="mass spectrometry"/>
<comment type="similarity">
    <text evidence="6">Belongs to the short scorpion toxin superfamily. Potassium channel inhibitor family. Alpha-KTx 18 subfamily.</text>
</comment>
<comment type="caution">
    <text evidence="6">Lacks the dyad motif characteristic of alpha-KTx and generally associated with channel blockage.</text>
</comment>
<sequence>MRFTGIILILISMTLIDSFFEMKVEATGPQTTCQAAMCEAGCKGLGKSMESCQGDTCKCKA</sequence>
<keyword id="KW-0002">3D-structure</keyword>
<keyword id="KW-0903">Direct protein sequencing</keyword>
<keyword id="KW-1015">Disulfide bond</keyword>
<keyword id="KW-0872">Ion channel impairing toxin</keyword>
<keyword id="KW-0528">Neurotoxin</keyword>
<keyword id="KW-0632">Potassium channel impairing toxin</keyword>
<keyword id="KW-0964">Secreted</keyword>
<keyword id="KW-0732">Signal</keyword>
<keyword id="KW-0800">Toxin</keyword>
<keyword id="KW-1220">Voltage-gated potassium channel impairing toxin</keyword>
<evidence type="ECO:0000255" key="1"/>
<evidence type="ECO:0000269" key="2">
    <source>
    </source>
</evidence>
<evidence type="ECO:0000269" key="3">
    <source>
    </source>
</evidence>
<evidence type="ECO:0000269" key="4">
    <source>
    </source>
</evidence>
<evidence type="ECO:0000303" key="5">
    <source>
    </source>
</evidence>
<evidence type="ECO:0000305" key="6"/>
<evidence type="ECO:0000305" key="7">
    <source>
    </source>
</evidence>
<evidence type="ECO:0000312" key="8">
    <source>
        <dbReference type="EMBL" id="JAT91155.1"/>
    </source>
</evidence>
<evidence type="ECO:0007829" key="9">
    <source>
        <dbReference type="PDB" id="2JP6"/>
    </source>
</evidence>
<proteinExistence type="evidence at protein level"/>